<keyword id="KW-0007">Acetylation</keyword>
<keyword id="KW-0349">Heme</keyword>
<keyword id="KW-0408">Iron</keyword>
<keyword id="KW-0472">Membrane</keyword>
<keyword id="KW-0479">Metal-binding</keyword>
<keyword id="KW-0496">Mitochondrion</keyword>
<keyword id="KW-0999">Mitochondrion inner membrane</keyword>
<keyword id="KW-0597">Phosphoprotein</keyword>
<keyword id="KW-0809">Transit peptide</keyword>
<keyword id="KW-0832">Ubl conjugation</keyword>
<proteinExistence type="evidence at transcript level"/>
<protein>
    <recommendedName>
        <fullName>Cytochrome c oxidase subunit 5A, mitochondrial</fullName>
    </recommendedName>
    <alternativeName>
        <fullName>Cytochrome c oxidase polypeptide Va</fullName>
    </alternativeName>
</protein>
<feature type="transit peptide" description="Mitochondrion" evidence="1">
    <location>
        <begin position="1"/>
        <end position="41"/>
    </location>
</feature>
<feature type="chain" id="PRO_0000355980" description="Cytochrome c oxidase subunit 5A, mitochondrial">
    <location>
        <begin position="42"/>
        <end position="150"/>
    </location>
</feature>
<feature type="short sequence motif" description="SIFI-degron" evidence="4">
    <location>
        <begin position="2"/>
        <end position="17"/>
    </location>
</feature>
<feature type="modified residue" description="N6-acetyllysine" evidence="3">
    <location>
        <position position="87"/>
    </location>
</feature>
<feature type="modified residue" description="N6-acetyllysine" evidence="3">
    <location>
        <position position="113"/>
    </location>
</feature>
<feature type="modified residue" description="Phosphothreonine" evidence="4">
    <location>
        <position position="141"/>
    </location>
</feature>
<dbReference type="EMBL" id="DQ987250">
    <property type="protein sequence ID" value="ABK92297.1"/>
    <property type="molecule type" value="mRNA"/>
</dbReference>
<dbReference type="SMR" id="B0VYY3"/>
<dbReference type="UniPathway" id="UPA00705"/>
<dbReference type="GO" id="GO:0005743">
    <property type="term" value="C:mitochondrial inner membrane"/>
    <property type="evidence" value="ECO:0007669"/>
    <property type="project" value="UniProtKB-SubCell"/>
</dbReference>
<dbReference type="GO" id="GO:0045277">
    <property type="term" value="C:respiratory chain complex IV"/>
    <property type="evidence" value="ECO:0007669"/>
    <property type="project" value="InterPro"/>
</dbReference>
<dbReference type="GO" id="GO:0046872">
    <property type="term" value="F:metal ion binding"/>
    <property type="evidence" value="ECO:0007669"/>
    <property type="project" value="UniProtKB-KW"/>
</dbReference>
<dbReference type="GO" id="GO:0006123">
    <property type="term" value="P:mitochondrial electron transport, cytochrome c to oxygen"/>
    <property type="evidence" value="ECO:0007669"/>
    <property type="project" value="InterPro"/>
</dbReference>
<dbReference type="CDD" id="cd00923">
    <property type="entry name" value="Cyt_c_Oxidase_Va"/>
    <property type="match status" value="1"/>
</dbReference>
<dbReference type="FunFam" id="1.25.40.40:FF:000002">
    <property type="entry name" value="cytochrome c oxidase subunit 5A, mitochondrial"/>
    <property type="match status" value="1"/>
</dbReference>
<dbReference type="Gene3D" id="1.25.40.40">
    <property type="entry name" value="Cytochrome c oxidase, subunit Va/VI"/>
    <property type="match status" value="1"/>
</dbReference>
<dbReference type="InterPro" id="IPR003204">
    <property type="entry name" value="Cyt_c_oxidase_su5A/6"/>
</dbReference>
<dbReference type="InterPro" id="IPR036545">
    <property type="entry name" value="Cyt_c_oxidase_su5A/6_sf"/>
</dbReference>
<dbReference type="PANTHER" id="PTHR14200">
    <property type="entry name" value="CYTOCHROME C OXIDASE POLYPEPTIDE"/>
    <property type="match status" value="1"/>
</dbReference>
<dbReference type="PANTHER" id="PTHR14200:SF16">
    <property type="entry name" value="CYTOCHROME C OXIDASE SUBUNIT 5A, MITOCHONDRIAL"/>
    <property type="match status" value="1"/>
</dbReference>
<dbReference type="Pfam" id="PF02284">
    <property type="entry name" value="COX5A"/>
    <property type="match status" value="1"/>
</dbReference>
<dbReference type="SUPFAM" id="SSF48479">
    <property type="entry name" value="Cytochrome c oxidase subunit E"/>
    <property type="match status" value="1"/>
</dbReference>
<comment type="function">
    <text evidence="2">Component of the cytochrome c oxidase, the last enzyme in the mitochondrial electron transport chain which drives oxidative phosphorylation. The respiratory chain contains 3 multisubunit complexes succinate dehydrogenase (complex II, CII), ubiquinol-cytochrome c oxidoreductase (cytochrome b-c1 complex, complex III, CIII) and cytochrome c oxidase (complex IV, CIV), that cooperate to transfer electrons derived from NADH and succinate to molecular oxygen, creating an electrochemical gradient over the inner membrane that drives transmembrane transport and the ATP synthase. Cytochrome c oxidase is the component of the respiratory chain that catalyzes the reduction of oxygen to water. Electrons originating from reduced cytochrome c in the intermembrane space (IMS) are transferred via the dinuclear copper A center (CU(A)) of subunit 2 and heme A of subunit 1 to the active site in subunit 1, a binuclear center (BNC) formed by heme A3 and copper B (CU(B)). The BNC reduces molecular oxygen to 2 water molecules using 4 electrons from cytochrome c in the IMS and 4 protons from the mitochondrial matrix.</text>
</comment>
<comment type="pathway">
    <text evidence="2">Energy metabolism; oxidative phosphorylation.</text>
</comment>
<comment type="subunit">
    <text evidence="1 4">Component of the cytochrome c oxidase (complex IV, CIV), a multisubunit enzyme composed of 14 subunits. The complex is composed of a catalytic core of 3 subunits MT-CO1, MT-CO2 and MT-CO3, encoded in the mitochondrial DNA, and 11 supernumerary subunits COX4I, COX5A, COX5B, COX6A, COX6B, COX6C, COX7A, COX7B, COX7C, COX8 and NDUFA4, which are encoded in the nuclear genome. The complex exists as a monomer or a dimer and forms supercomplexes (SCs) in the inner mitochondrial membrane with NADH-ubiquinone oxidoreductase (complex I, CI) and ubiquinol-cytochrome c oxidoreductase (cytochrome b-c1 complex, complex III, CIII), resulting in different assemblies (supercomplex SCI(1)III(2)IV(1) and megacomplex MCI(2)III(2)IV(2)) (By similarity). Interacts with AFG1L (By similarity). Interacts with RAB5IF (By similarity).</text>
</comment>
<comment type="subcellular location">
    <subcellularLocation>
        <location evidence="1">Mitochondrion inner membrane</location>
        <topology evidence="1">Peripheral membrane protein</topology>
        <orientation evidence="1">Matrix side</orientation>
    </subcellularLocation>
</comment>
<comment type="PTM">
    <text evidence="4">In response to mitochondrial stress, the precursor protein is ubiquitinated by the SIFI complex in the cytoplasm before mitochondrial import, leading to its degradation. Within the SIFI complex, UBR4 initiates ubiquitin chain that are further elongated or branched by KCMF1.</text>
</comment>
<comment type="similarity">
    <text evidence="5">Belongs to the cytochrome c oxidase subunit 5A family.</text>
</comment>
<accession>B0VYY3</accession>
<reference key="1">
    <citation type="journal article" date="2008" name="BMC Evol. Biol.">
        <title>Molecular evolution of the cytochrome c oxidase subunit 5A gene in primates.</title>
        <authorList>
            <person name="Uddin M."/>
            <person name="Opazo J.C."/>
            <person name="Wildman D.E."/>
            <person name="Sherwood C.C."/>
            <person name="Hof P.R."/>
            <person name="Goodman M."/>
            <person name="Grossman L.I."/>
        </authorList>
    </citation>
    <scope>NUCLEOTIDE SEQUENCE [MRNA]</scope>
</reference>
<organism>
    <name type="scientific">Otolemur crassicaudatus</name>
    <name type="common">Brown greater galago</name>
    <name type="synonym">Galago crassicaudatus</name>
    <dbReference type="NCBI Taxonomy" id="9463"/>
    <lineage>
        <taxon>Eukaryota</taxon>
        <taxon>Metazoa</taxon>
        <taxon>Chordata</taxon>
        <taxon>Craniata</taxon>
        <taxon>Vertebrata</taxon>
        <taxon>Euteleostomi</taxon>
        <taxon>Mammalia</taxon>
        <taxon>Eutheria</taxon>
        <taxon>Euarchontoglires</taxon>
        <taxon>Primates</taxon>
        <taxon>Strepsirrhini</taxon>
        <taxon>Lorisiformes</taxon>
        <taxon>Galagidae</taxon>
        <taxon>Otolemur</taxon>
    </lineage>
</organism>
<name>COX5A_OTOCR</name>
<sequence length="150" mass="16610">MLGTALRRCAVAAASRAGSRGLLHPTPVPGPTAAIQSIRCYSHGSHETDEEFDARWVTYFNKPDIDAWELRKGMNTLVGYDLVPEPKIIDAALRACRRLNDFASAVRILEVVKDKAGPHKEIYPYVIQELRPTLNELGISTPEELGLDKV</sequence>
<evidence type="ECO:0000250" key="1">
    <source>
        <dbReference type="UniProtKB" id="P00426"/>
    </source>
</evidence>
<evidence type="ECO:0000250" key="2">
    <source>
        <dbReference type="UniProtKB" id="P00427"/>
    </source>
</evidence>
<evidence type="ECO:0000250" key="3">
    <source>
        <dbReference type="UniProtKB" id="P12787"/>
    </source>
</evidence>
<evidence type="ECO:0000250" key="4">
    <source>
        <dbReference type="UniProtKB" id="P20674"/>
    </source>
</evidence>
<evidence type="ECO:0000305" key="5"/>
<gene>
    <name type="primary">COX5A</name>
</gene>